<organism>
    <name type="scientific">Prochlorococcus marinus (strain MIT 9515)</name>
    <dbReference type="NCBI Taxonomy" id="167542"/>
    <lineage>
        <taxon>Bacteria</taxon>
        <taxon>Bacillati</taxon>
        <taxon>Cyanobacteriota</taxon>
        <taxon>Cyanophyceae</taxon>
        <taxon>Synechococcales</taxon>
        <taxon>Prochlorococcaceae</taxon>
        <taxon>Prochlorococcus</taxon>
    </lineage>
</organism>
<gene>
    <name evidence="1" type="primary">argC</name>
    <name type="ordered locus">P9515_09741</name>
</gene>
<accession>A2BWM0</accession>
<keyword id="KW-0028">Amino-acid biosynthesis</keyword>
<keyword id="KW-0055">Arginine biosynthesis</keyword>
<keyword id="KW-0963">Cytoplasm</keyword>
<keyword id="KW-0521">NADP</keyword>
<keyword id="KW-0560">Oxidoreductase</keyword>
<evidence type="ECO:0000255" key="1">
    <source>
        <dbReference type="HAMAP-Rule" id="MF_00150"/>
    </source>
</evidence>
<protein>
    <recommendedName>
        <fullName evidence="1">N-acetyl-gamma-glutamyl-phosphate reductase</fullName>
        <shortName evidence="1">AGPR</shortName>
        <ecNumber evidence="1">1.2.1.38</ecNumber>
    </recommendedName>
    <alternativeName>
        <fullName evidence="1">N-acetyl-glutamate semialdehyde dehydrogenase</fullName>
        <shortName evidence="1">NAGSA dehydrogenase</shortName>
    </alternativeName>
</protein>
<comment type="function">
    <text evidence="1">Catalyzes the NADPH-dependent reduction of N-acetyl-5-glutamyl phosphate to yield N-acetyl-L-glutamate 5-semialdehyde.</text>
</comment>
<comment type="catalytic activity">
    <reaction evidence="1">
        <text>N-acetyl-L-glutamate 5-semialdehyde + phosphate + NADP(+) = N-acetyl-L-glutamyl 5-phosphate + NADPH + H(+)</text>
        <dbReference type="Rhea" id="RHEA:21588"/>
        <dbReference type="ChEBI" id="CHEBI:15378"/>
        <dbReference type="ChEBI" id="CHEBI:29123"/>
        <dbReference type="ChEBI" id="CHEBI:43474"/>
        <dbReference type="ChEBI" id="CHEBI:57783"/>
        <dbReference type="ChEBI" id="CHEBI:57936"/>
        <dbReference type="ChEBI" id="CHEBI:58349"/>
        <dbReference type="EC" id="1.2.1.38"/>
    </reaction>
</comment>
<comment type="pathway">
    <text evidence="1">Amino-acid biosynthesis; L-arginine biosynthesis; N(2)-acetyl-L-ornithine from L-glutamate: step 3/4.</text>
</comment>
<comment type="subcellular location">
    <subcellularLocation>
        <location evidence="1">Cytoplasm</location>
    </subcellularLocation>
</comment>
<comment type="similarity">
    <text evidence="1">Belongs to the NAGSA dehydrogenase family. Type 1 subfamily.</text>
</comment>
<reference key="1">
    <citation type="journal article" date="2007" name="PLoS Genet.">
        <title>Patterns and implications of gene gain and loss in the evolution of Prochlorococcus.</title>
        <authorList>
            <person name="Kettler G.C."/>
            <person name="Martiny A.C."/>
            <person name="Huang K."/>
            <person name="Zucker J."/>
            <person name="Coleman M.L."/>
            <person name="Rodrigue S."/>
            <person name="Chen F."/>
            <person name="Lapidus A."/>
            <person name="Ferriera S."/>
            <person name="Johnson J."/>
            <person name="Steglich C."/>
            <person name="Church G.M."/>
            <person name="Richardson P."/>
            <person name="Chisholm S.W."/>
        </authorList>
    </citation>
    <scope>NUCLEOTIDE SEQUENCE [LARGE SCALE GENOMIC DNA]</scope>
    <source>
        <strain>MIT 9515</strain>
    </source>
</reference>
<feature type="chain" id="PRO_1000011033" description="N-acetyl-gamma-glutamyl-phosphate reductase">
    <location>
        <begin position="1"/>
        <end position="351"/>
    </location>
</feature>
<feature type="active site" evidence="1">
    <location>
        <position position="154"/>
    </location>
</feature>
<name>ARGC_PROM5</name>
<proteinExistence type="inferred from homology"/>
<dbReference type="EC" id="1.2.1.38" evidence="1"/>
<dbReference type="EMBL" id="CP000552">
    <property type="protein sequence ID" value="ABM72181.1"/>
    <property type="molecule type" value="Genomic_DNA"/>
</dbReference>
<dbReference type="RefSeq" id="WP_011820283.1">
    <property type="nucleotide sequence ID" value="NC_008817.1"/>
</dbReference>
<dbReference type="SMR" id="A2BWM0"/>
<dbReference type="STRING" id="167542.P9515_09741"/>
<dbReference type="GeneID" id="60201993"/>
<dbReference type="KEGG" id="pmc:P9515_09741"/>
<dbReference type="eggNOG" id="COG0002">
    <property type="taxonomic scope" value="Bacteria"/>
</dbReference>
<dbReference type="HOGENOM" id="CLU_006384_0_1_3"/>
<dbReference type="OrthoDB" id="9801289at2"/>
<dbReference type="UniPathway" id="UPA00068">
    <property type="reaction ID" value="UER00108"/>
</dbReference>
<dbReference type="Proteomes" id="UP000001589">
    <property type="component" value="Chromosome"/>
</dbReference>
<dbReference type="GO" id="GO:0005737">
    <property type="term" value="C:cytoplasm"/>
    <property type="evidence" value="ECO:0007669"/>
    <property type="project" value="UniProtKB-SubCell"/>
</dbReference>
<dbReference type="GO" id="GO:0003942">
    <property type="term" value="F:N-acetyl-gamma-glutamyl-phosphate reductase activity"/>
    <property type="evidence" value="ECO:0007669"/>
    <property type="project" value="UniProtKB-UniRule"/>
</dbReference>
<dbReference type="GO" id="GO:0051287">
    <property type="term" value="F:NAD binding"/>
    <property type="evidence" value="ECO:0007669"/>
    <property type="project" value="InterPro"/>
</dbReference>
<dbReference type="GO" id="GO:0070401">
    <property type="term" value="F:NADP+ binding"/>
    <property type="evidence" value="ECO:0007669"/>
    <property type="project" value="InterPro"/>
</dbReference>
<dbReference type="GO" id="GO:0006526">
    <property type="term" value="P:L-arginine biosynthetic process"/>
    <property type="evidence" value="ECO:0007669"/>
    <property type="project" value="UniProtKB-UniRule"/>
</dbReference>
<dbReference type="CDD" id="cd23934">
    <property type="entry name" value="AGPR_1_C"/>
    <property type="match status" value="1"/>
</dbReference>
<dbReference type="CDD" id="cd17895">
    <property type="entry name" value="AGPR_1_N"/>
    <property type="match status" value="1"/>
</dbReference>
<dbReference type="Gene3D" id="3.30.360.10">
    <property type="entry name" value="Dihydrodipicolinate Reductase, domain 2"/>
    <property type="match status" value="1"/>
</dbReference>
<dbReference type="Gene3D" id="3.40.50.720">
    <property type="entry name" value="NAD(P)-binding Rossmann-like Domain"/>
    <property type="match status" value="1"/>
</dbReference>
<dbReference type="HAMAP" id="MF_00150">
    <property type="entry name" value="ArgC_type1"/>
    <property type="match status" value="1"/>
</dbReference>
<dbReference type="InterPro" id="IPR023013">
    <property type="entry name" value="AGPR_AS"/>
</dbReference>
<dbReference type="InterPro" id="IPR000706">
    <property type="entry name" value="AGPR_type-1"/>
</dbReference>
<dbReference type="InterPro" id="IPR036291">
    <property type="entry name" value="NAD(P)-bd_dom_sf"/>
</dbReference>
<dbReference type="InterPro" id="IPR050085">
    <property type="entry name" value="NAGSA_dehydrogenase"/>
</dbReference>
<dbReference type="InterPro" id="IPR000534">
    <property type="entry name" value="Semialdehyde_DH_NAD-bd"/>
</dbReference>
<dbReference type="NCBIfam" id="TIGR01850">
    <property type="entry name" value="argC"/>
    <property type="match status" value="1"/>
</dbReference>
<dbReference type="PANTHER" id="PTHR32338:SF10">
    <property type="entry name" value="N-ACETYL-GAMMA-GLUTAMYL-PHOSPHATE REDUCTASE, CHLOROPLASTIC-RELATED"/>
    <property type="match status" value="1"/>
</dbReference>
<dbReference type="PANTHER" id="PTHR32338">
    <property type="entry name" value="N-ACETYL-GAMMA-GLUTAMYL-PHOSPHATE REDUCTASE, CHLOROPLASTIC-RELATED-RELATED"/>
    <property type="match status" value="1"/>
</dbReference>
<dbReference type="Pfam" id="PF01118">
    <property type="entry name" value="Semialdhyde_dh"/>
    <property type="match status" value="1"/>
</dbReference>
<dbReference type="Pfam" id="PF22698">
    <property type="entry name" value="Semialdhyde_dhC_1"/>
    <property type="match status" value="1"/>
</dbReference>
<dbReference type="SMART" id="SM00859">
    <property type="entry name" value="Semialdhyde_dh"/>
    <property type="match status" value="1"/>
</dbReference>
<dbReference type="SUPFAM" id="SSF55347">
    <property type="entry name" value="Glyceraldehyde-3-phosphate dehydrogenase-like, C-terminal domain"/>
    <property type="match status" value="1"/>
</dbReference>
<dbReference type="SUPFAM" id="SSF51735">
    <property type="entry name" value="NAD(P)-binding Rossmann-fold domains"/>
    <property type="match status" value="1"/>
</dbReference>
<dbReference type="PROSITE" id="PS01224">
    <property type="entry name" value="ARGC"/>
    <property type="match status" value="1"/>
</dbReference>
<sequence>MNVAIVGATGYGGIQSVNLLKDNKNYKISYLGGYKTSGTKWSDNFPFIKLDSNNLIEKISIDRIADKADVALLCLPNGISSTLTRGLLEKGVKVIDLSADYRYKSLEQWKRIYSNEAAKYKRDDDDLCKEAVYGLPEINNKDISKARLIACPGCYPTSALIPLIPFLSQGIIDNEGIIIDSKSGTSGGGRESSQKLLFSECGDGLSAYGLINHRHTSEIEQIASFISGNDIELLFTPHLLPMIRGMHSTIYGRLRDPGLTSSDCRIILENFYRNYSNIRVLPVDIYPSTKWVKNTNEIHLSVKVDNRNGRIILLSVIDNLLKGQTGQAIQNLNLISGLPLNNGLEMINHYP</sequence>